<feature type="chain" id="PRO_0000391972" description="Ubiquitin-fold modifier-conjugating enzyme 1">
    <location>
        <begin position="1"/>
        <end position="164"/>
    </location>
</feature>
<feature type="active site" description="Glycyl thioester intermediate" evidence="1">
    <location>
        <position position="116"/>
    </location>
</feature>
<proteinExistence type="inferred from homology"/>
<evidence type="ECO:0000250" key="1"/>
<evidence type="ECO:0000305" key="2"/>
<name>UFC1_DROPE</name>
<accession>B4H538</accession>
<keyword id="KW-1185">Reference proteome</keyword>
<keyword id="KW-0833">Ubl conjugation pathway</keyword>
<dbReference type="EMBL" id="CH479210">
    <property type="protein sequence ID" value="EDW32874.1"/>
    <property type="molecule type" value="Genomic_DNA"/>
</dbReference>
<dbReference type="SMR" id="B4H538"/>
<dbReference type="STRING" id="7234.B4H538"/>
<dbReference type="EnsemblMetazoa" id="FBtr0175826">
    <property type="protein sequence ID" value="FBpp0174318"/>
    <property type="gene ID" value="FBgn0147821"/>
</dbReference>
<dbReference type="EnsemblMetazoa" id="XM_002025931.2">
    <property type="protein sequence ID" value="XP_002025967.1"/>
    <property type="gene ID" value="LOC6600796"/>
</dbReference>
<dbReference type="GeneID" id="6600796"/>
<dbReference type="KEGG" id="dpe:6600796"/>
<dbReference type="CTD" id="51506"/>
<dbReference type="eggNOG" id="KOG3357">
    <property type="taxonomic scope" value="Eukaryota"/>
</dbReference>
<dbReference type="HOGENOM" id="CLU_101170_0_0_1"/>
<dbReference type="OMA" id="LWQKNVP"/>
<dbReference type="OrthoDB" id="10256182at2759"/>
<dbReference type="PhylomeDB" id="B4H538"/>
<dbReference type="Proteomes" id="UP000008744">
    <property type="component" value="Unassembled WGS sequence"/>
</dbReference>
<dbReference type="GO" id="GO:0005737">
    <property type="term" value="C:cytoplasm"/>
    <property type="evidence" value="ECO:0007669"/>
    <property type="project" value="TreeGrafter"/>
</dbReference>
<dbReference type="GO" id="GO:0061657">
    <property type="term" value="F:UFM1 conjugating enzyme activity"/>
    <property type="evidence" value="ECO:0007669"/>
    <property type="project" value="InterPro"/>
</dbReference>
<dbReference type="GO" id="GO:1990592">
    <property type="term" value="P:protein K69-linked ufmylation"/>
    <property type="evidence" value="ECO:0007669"/>
    <property type="project" value="TreeGrafter"/>
</dbReference>
<dbReference type="CDD" id="cd11686">
    <property type="entry name" value="UBCc_UFC1"/>
    <property type="match status" value="1"/>
</dbReference>
<dbReference type="FunFam" id="3.10.110.10:FF:000042">
    <property type="entry name" value="Ubiquitin-fold modifier-conjugating enzyme 1"/>
    <property type="match status" value="1"/>
</dbReference>
<dbReference type="Gene3D" id="3.10.110.10">
    <property type="entry name" value="Ubiquitin Conjugating Enzyme"/>
    <property type="match status" value="1"/>
</dbReference>
<dbReference type="InterPro" id="IPR016135">
    <property type="entry name" value="UBQ-conjugating_enzyme/RWD"/>
</dbReference>
<dbReference type="InterPro" id="IPR014806">
    <property type="entry name" value="Ufc1"/>
</dbReference>
<dbReference type="PANTHER" id="PTHR12921">
    <property type="entry name" value="UBIQUITIN-FOLD MODIFIER-CONJUGATING ENZYME 1"/>
    <property type="match status" value="1"/>
</dbReference>
<dbReference type="PANTHER" id="PTHR12921:SF0">
    <property type="entry name" value="UBIQUITIN-FOLD MODIFIER-CONJUGATING ENZYME 1"/>
    <property type="match status" value="1"/>
</dbReference>
<dbReference type="Pfam" id="PF08694">
    <property type="entry name" value="UFC1"/>
    <property type="match status" value="1"/>
</dbReference>
<dbReference type="PIRSF" id="PIRSF008716">
    <property type="entry name" value="DUF1782"/>
    <property type="match status" value="1"/>
</dbReference>
<dbReference type="SUPFAM" id="SSF54495">
    <property type="entry name" value="UBC-like"/>
    <property type="match status" value="1"/>
</dbReference>
<reference key="1">
    <citation type="journal article" date="2007" name="Nature">
        <title>Evolution of genes and genomes on the Drosophila phylogeny.</title>
        <authorList>
            <consortium name="Drosophila 12 genomes consortium"/>
        </authorList>
    </citation>
    <scope>NUCLEOTIDE SEQUENCE [LARGE SCALE GENOMIC DNA]</scope>
    <source>
        <strain>MSH-3 / Tucson 14011-0111.49</strain>
    </source>
</reference>
<protein>
    <recommendedName>
        <fullName>Ubiquitin-fold modifier-conjugating enzyme 1</fullName>
    </recommendedName>
    <alternativeName>
        <fullName>Ufm1-conjugating enzyme 1</fullName>
    </alternativeName>
</protein>
<organism>
    <name type="scientific">Drosophila persimilis</name>
    <name type="common">Fruit fly</name>
    <dbReference type="NCBI Taxonomy" id="7234"/>
    <lineage>
        <taxon>Eukaryota</taxon>
        <taxon>Metazoa</taxon>
        <taxon>Ecdysozoa</taxon>
        <taxon>Arthropoda</taxon>
        <taxon>Hexapoda</taxon>
        <taxon>Insecta</taxon>
        <taxon>Pterygota</taxon>
        <taxon>Neoptera</taxon>
        <taxon>Endopterygota</taxon>
        <taxon>Diptera</taxon>
        <taxon>Brachycera</taxon>
        <taxon>Muscomorpha</taxon>
        <taxon>Ephydroidea</taxon>
        <taxon>Drosophilidae</taxon>
        <taxon>Drosophila</taxon>
        <taxon>Sophophora</taxon>
    </lineage>
</organism>
<comment type="function">
    <text evidence="1">E2-like enzyme which forms an intermediate with UFM1 via a thioester linkage.</text>
</comment>
<comment type="similarity">
    <text evidence="2">Belongs to the ubiquitin-conjugating enzyme family. UFC1 subfamily.</text>
</comment>
<sequence>MVDDSTRKTLSNIPLLQIRAGPREKDVWVQRLKEEYHALIMYVKNNKQSGSDWFRLESNKEGTKWFGKCWYMHNLLKYEFDVEFDIPVTYPTTAPEIALPELDGKTAKMYRGGKICLTDHFKPLWARNVPKFGIAHAMALGLAPWLAVEVPDLIEKGIITYKEK</sequence>
<gene>
    <name type="ORF">GL10211</name>
</gene>